<gene>
    <name evidence="1" type="primary">panC</name>
    <name type="ordered locus">BP3821</name>
</gene>
<comment type="function">
    <text evidence="1">Catalyzes the condensation of pantoate with beta-alanine in an ATP-dependent reaction via a pantoyl-adenylate intermediate.</text>
</comment>
<comment type="catalytic activity">
    <reaction evidence="1">
        <text>(R)-pantoate + beta-alanine + ATP = (R)-pantothenate + AMP + diphosphate + H(+)</text>
        <dbReference type="Rhea" id="RHEA:10912"/>
        <dbReference type="ChEBI" id="CHEBI:15378"/>
        <dbReference type="ChEBI" id="CHEBI:15980"/>
        <dbReference type="ChEBI" id="CHEBI:29032"/>
        <dbReference type="ChEBI" id="CHEBI:30616"/>
        <dbReference type="ChEBI" id="CHEBI:33019"/>
        <dbReference type="ChEBI" id="CHEBI:57966"/>
        <dbReference type="ChEBI" id="CHEBI:456215"/>
        <dbReference type="EC" id="6.3.2.1"/>
    </reaction>
</comment>
<comment type="pathway">
    <text evidence="1">Cofactor biosynthesis; (R)-pantothenate biosynthesis; (R)-pantothenate from (R)-pantoate and beta-alanine: step 1/1.</text>
</comment>
<comment type="subunit">
    <text evidence="1">Homodimer.</text>
</comment>
<comment type="subcellular location">
    <subcellularLocation>
        <location evidence="1">Cytoplasm</location>
    </subcellularLocation>
</comment>
<comment type="miscellaneous">
    <text evidence="1">The reaction proceeds by a bi uni uni bi ping pong mechanism.</text>
</comment>
<comment type="similarity">
    <text evidence="1">Belongs to the pantothenate synthetase family.</text>
</comment>
<feature type="chain" id="PRO_0000305408" description="Pantothenate synthetase">
    <location>
        <begin position="1"/>
        <end position="280"/>
    </location>
</feature>
<feature type="active site" description="Proton donor" evidence="1">
    <location>
        <position position="33"/>
    </location>
</feature>
<feature type="binding site" evidence="1">
    <location>
        <begin position="26"/>
        <end position="33"/>
    </location>
    <ligand>
        <name>ATP</name>
        <dbReference type="ChEBI" id="CHEBI:30616"/>
    </ligand>
</feature>
<feature type="binding site" evidence="1">
    <location>
        <position position="57"/>
    </location>
    <ligand>
        <name>(R)-pantoate</name>
        <dbReference type="ChEBI" id="CHEBI:15980"/>
    </ligand>
</feature>
<feature type="binding site" evidence="1">
    <location>
        <position position="57"/>
    </location>
    <ligand>
        <name>beta-alanine</name>
        <dbReference type="ChEBI" id="CHEBI:57966"/>
    </ligand>
</feature>
<feature type="binding site" evidence="1">
    <location>
        <begin position="145"/>
        <end position="148"/>
    </location>
    <ligand>
        <name>ATP</name>
        <dbReference type="ChEBI" id="CHEBI:30616"/>
    </ligand>
</feature>
<feature type="binding site" evidence="1">
    <location>
        <position position="151"/>
    </location>
    <ligand>
        <name>(R)-pantoate</name>
        <dbReference type="ChEBI" id="CHEBI:15980"/>
    </ligand>
</feature>
<feature type="binding site" evidence="1">
    <location>
        <position position="174"/>
    </location>
    <ligand>
        <name>ATP</name>
        <dbReference type="ChEBI" id="CHEBI:30616"/>
    </ligand>
</feature>
<feature type="binding site" evidence="1">
    <location>
        <begin position="182"/>
        <end position="185"/>
    </location>
    <ligand>
        <name>ATP</name>
        <dbReference type="ChEBI" id="CHEBI:30616"/>
    </ligand>
</feature>
<reference key="1">
    <citation type="journal article" date="2003" name="Nat. Genet.">
        <title>Comparative analysis of the genome sequences of Bordetella pertussis, Bordetella parapertussis and Bordetella bronchiseptica.</title>
        <authorList>
            <person name="Parkhill J."/>
            <person name="Sebaihia M."/>
            <person name="Preston A."/>
            <person name="Murphy L.D."/>
            <person name="Thomson N.R."/>
            <person name="Harris D.E."/>
            <person name="Holden M.T.G."/>
            <person name="Churcher C.M."/>
            <person name="Bentley S.D."/>
            <person name="Mungall K.L."/>
            <person name="Cerdeno-Tarraga A.-M."/>
            <person name="Temple L."/>
            <person name="James K.D."/>
            <person name="Harris B."/>
            <person name="Quail M.A."/>
            <person name="Achtman M."/>
            <person name="Atkin R."/>
            <person name="Baker S."/>
            <person name="Basham D."/>
            <person name="Bason N."/>
            <person name="Cherevach I."/>
            <person name="Chillingworth T."/>
            <person name="Collins M."/>
            <person name="Cronin A."/>
            <person name="Davis P."/>
            <person name="Doggett J."/>
            <person name="Feltwell T."/>
            <person name="Goble A."/>
            <person name="Hamlin N."/>
            <person name="Hauser H."/>
            <person name="Holroyd S."/>
            <person name="Jagels K."/>
            <person name="Leather S."/>
            <person name="Moule S."/>
            <person name="Norberczak H."/>
            <person name="O'Neil S."/>
            <person name="Ormond D."/>
            <person name="Price C."/>
            <person name="Rabbinowitsch E."/>
            <person name="Rutter S."/>
            <person name="Sanders M."/>
            <person name="Saunders D."/>
            <person name="Seeger K."/>
            <person name="Sharp S."/>
            <person name="Simmonds M."/>
            <person name="Skelton J."/>
            <person name="Squares R."/>
            <person name="Squares S."/>
            <person name="Stevens K."/>
            <person name="Unwin L."/>
            <person name="Whitehead S."/>
            <person name="Barrell B.G."/>
            <person name="Maskell D.J."/>
        </authorList>
    </citation>
    <scope>NUCLEOTIDE SEQUENCE [LARGE SCALE GENOMIC DNA]</scope>
    <source>
        <strain>Tohama I / ATCC BAA-589 / NCTC 13251</strain>
    </source>
</reference>
<organism>
    <name type="scientific">Bordetella pertussis (strain Tohama I / ATCC BAA-589 / NCTC 13251)</name>
    <dbReference type="NCBI Taxonomy" id="257313"/>
    <lineage>
        <taxon>Bacteria</taxon>
        <taxon>Pseudomonadati</taxon>
        <taxon>Pseudomonadota</taxon>
        <taxon>Betaproteobacteria</taxon>
        <taxon>Burkholderiales</taxon>
        <taxon>Alcaligenaceae</taxon>
        <taxon>Bordetella</taxon>
    </lineage>
</organism>
<sequence length="280" mass="31574">MKVVHTIQDLRDHLRGQNRVAFVPTMGNLHEGHLALMKLARQHGDPVVTSIFVNRLQFGPNEDFDRYPRTLPDDVAKMERDRDVYLVFAPDEREMYPEPQNYRVLPPDDLGDILEGEFRPGFFTGVCTVVMKLLACVQPRVAVFGKKDYQQLMVVRNMCRQLQLPVEILAHETVRADDGLALSSRNRYLSEAERAEAPVLYETLRGIAQRRAGGEQDPAALERVAAQALADRGWKVDYVAVRRQRDLKAPDVAEMSAGEPLVALAAAKLGATRLIDNLEF</sequence>
<keyword id="KW-0067">ATP-binding</keyword>
<keyword id="KW-0963">Cytoplasm</keyword>
<keyword id="KW-0436">Ligase</keyword>
<keyword id="KW-0547">Nucleotide-binding</keyword>
<keyword id="KW-0566">Pantothenate biosynthesis</keyword>
<keyword id="KW-1185">Reference proteome</keyword>
<proteinExistence type="inferred from homology"/>
<name>PANC_BORPE</name>
<protein>
    <recommendedName>
        <fullName evidence="1">Pantothenate synthetase</fullName>
        <shortName evidence="1">PS</shortName>
        <ecNumber evidence="1">6.3.2.1</ecNumber>
    </recommendedName>
    <alternativeName>
        <fullName evidence="1">Pantoate--beta-alanine ligase</fullName>
    </alternativeName>
    <alternativeName>
        <fullName evidence="1">Pantoate-activating enzyme</fullName>
    </alternativeName>
</protein>
<accession>Q7VSV1</accession>
<evidence type="ECO:0000255" key="1">
    <source>
        <dbReference type="HAMAP-Rule" id="MF_00158"/>
    </source>
</evidence>
<dbReference type="EC" id="6.3.2.1" evidence="1"/>
<dbReference type="EMBL" id="BX640422">
    <property type="protein sequence ID" value="CAE44076.1"/>
    <property type="molecule type" value="Genomic_DNA"/>
</dbReference>
<dbReference type="RefSeq" id="NP_882319.1">
    <property type="nucleotide sequence ID" value="NC_002929.2"/>
</dbReference>
<dbReference type="RefSeq" id="WP_003815051.1">
    <property type="nucleotide sequence ID" value="NZ_CP039022.1"/>
</dbReference>
<dbReference type="SMR" id="Q7VSV1"/>
<dbReference type="STRING" id="257313.BP3821"/>
<dbReference type="PaxDb" id="257313-BP3821"/>
<dbReference type="GeneID" id="93205764"/>
<dbReference type="KEGG" id="bpe:BP3821"/>
<dbReference type="PATRIC" id="fig|257313.5.peg.4129"/>
<dbReference type="eggNOG" id="COG0414">
    <property type="taxonomic scope" value="Bacteria"/>
</dbReference>
<dbReference type="HOGENOM" id="CLU_047148_0_0_4"/>
<dbReference type="UniPathway" id="UPA00028">
    <property type="reaction ID" value="UER00005"/>
</dbReference>
<dbReference type="Proteomes" id="UP000002676">
    <property type="component" value="Chromosome"/>
</dbReference>
<dbReference type="GO" id="GO:0005829">
    <property type="term" value="C:cytosol"/>
    <property type="evidence" value="ECO:0007669"/>
    <property type="project" value="TreeGrafter"/>
</dbReference>
<dbReference type="GO" id="GO:0005524">
    <property type="term" value="F:ATP binding"/>
    <property type="evidence" value="ECO:0007669"/>
    <property type="project" value="UniProtKB-KW"/>
</dbReference>
<dbReference type="GO" id="GO:0004592">
    <property type="term" value="F:pantoate-beta-alanine ligase activity"/>
    <property type="evidence" value="ECO:0007669"/>
    <property type="project" value="UniProtKB-UniRule"/>
</dbReference>
<dbReference type="GO" id="GO:0015940">
    <property type="term" value="P:pantothenate biosynthetic process"/>
    <property type="evidence" value="ECO:0007669"/>
    <property type="project" value="UniProtKB-UniRule"/>
</dbReference>
<dbReference type="CDD" id="cd00560">
    <property type="entry name" value="PanC"/>
    <property type="match status" value="1"/>
</dbReference>
<dbReference type="Gene3D" id="3.40.50.620">
    <property type="entry name" value="HUPs"/>
    <property type="match status" value="1"/>
</dbReference>
<dbReference type="Gene3D" id="3.30.1300.10">
    <property type="entry name" value="Pantoate-beta-alanine ligase, C-terminal domain"/>
    <property type="match status" value="1"/>
</dbReference>
<dbReference type="HAMAP" id="MF_00158">
    <property type="entry name" value="PanC"/>
    <property type="match status" value="1"/>
</dbReference>
<dbReference type="InterPro" id="IPR004821">
    <property type="entry name" value="Cyt_trans-like"/>
</dbReference>
<dbReference type="InterPro" id="IPR003721">
    <property type="entry name" value="Pantoate_ligase"/>
</dbReference>
<dbReference type="InterPro" id="IPR042176">
    <property type="entry name" value="Pantoate_ligase_C"/>
</dbReference>
<dbReference type="InterPro" id="IPR014729">
    <property type="entry name" value="Rossmann-like_a/b/a_fold"/>
</dbReference>
<dbReference type="NCBIfam" id="TIGR00125">
    <property type="entry name" value="cyt_tran_rel"/>
    <property type="match status" value="1"/>
</dbReference>
<dbReference type="NCBIfam" id="TIGR00018">
    <property type="entry name" value="panC"/>
    <property type="match status" value="1"/>
</dbReference>
<dbReference type="PANTHER" id="PTHR21299">
    <property type="entry name" value="CYTIDYLATE KINASE/PANTOATE-BETA-ALANINE LIGASE"/>
    <property type="match status" value="1"/>
</dbReference>
<dbReference type="PANTHER" id="PTHR21299:SF1">
    <property type="entry name" value="PANTOATE--BETA-ALANINE LIGASE"/>
    <property type="match status" value="1"/>
</dbReference>
<dbReference type="Pfam" id="PF02569">
    <property type="entry name" value="Pantoate_ligase"/>
    <property type="match status" value="1"/>
</dbReference>
<dbReference type="SUPFAM" id="SSF52374">
    <property type="entry name" value="Nucleotidylyl transferase"/>
    <property type="match status" value="1"/>
</dbReference>